<comment type="function">
    <text evidence="1">Catalyzes the hydrolysis of N-succinyl-L,L-diaminopimelic acid (SDAP), forming succinate and LL-2,6-diaminopimelate (DAP), an intermediate involved in the bacterial biosynthesis of lysine and meso-diaminopimelic acid, an essential component of bacterial cell walls.</text>
</comment>
<comment type="catalytic activity">
    <reaction evidence="1">
        <text>N-succinyl-(2S,6S)-2,6-diaminopimelate + H2O = (2S,6S)-2,6-diaminopimelate + succinate</text>
        <dbReference type="Rhea" id="RHEA:22608"/>
        <dbReference type="ChEBI" id="CHEBI:15377"/>
        <dbReference type="ChEBI" id="CHEBI:30031"/>
        <dbReference type="ChEBI" id="CHEBI:57609"/>
        <dbReference type="ChEBI" id="CHEBI:58087"/>
        <dbReference type="EC" id="3.5.1.18"/>
    </reaction>
</comment>
<comment type="cofactor">
    <cofactor evidence="1">
        <name>Zn(2+)</name>
        <dbReference type="ChEBI" id="CHEBI:29105"/>
    </cofactor>
    <cofactor evidence="1">
        <name>Co(2+)</name>
        <dbReference type="ChEBI" id="CHEBI:48828"/>
    </cofactor>
    <text evidence="1">Binds 2 Zn(2+) or Co(2+) ions per subunit.</text>
</comment>
<comment type="pathway">
    <text evidence="1">Amino-acid biosynthesis; L-lysine biosynthesis via DAP pathway; LL-2,6-diaminopimelate from (S)-tetrahydrodipicolinate (succinylase route): step 3/3.</text>
</comment>
<comment type="subunit">
    <text evidence="1">Homodimer.</text>
</comment>
<comment type="similarity">
    <text evidence="1">Belongs to the peptidase M20A family. DapE subfamily.</text>
</comment>
<name>DAPE_SALTI</name>
<keyword id="KW-0028">Amino-acid biosynthesis</keyword>
<keyword id="KW-0170">Cobalt</keyword>
<keyword id="KW-0220">Diaminopimelate biosynthesis</keyword>
<keyword id="KW-0378">Hydrolase</keyword>
<keyword id="KW-0457">Lysine biosynthesis</keyword>
<keyword id="KW-0479">Metal-binding</keyword>
<keyword id="KW-0862">Zinc</keyword>
<feature type="chain" id="PRO_0000375722" description="Succinyl-diaminopimelate desuccinylase">
    <location>
        <begin position="1"/>
        <end position="375"/>
    </location>
</feature>
<feature type="active site" evidence="1">
    <location>
        <position position="68"/>
    </location>
</feature>
<feature type="active site" description="Proton acceptor" evidence="1">
    <location>
        <position position="133"/>
    </location>
</feature>
<feature type="binding site" evidence="1">
    <location>
        <position position="66"/>
    </location>
    <ligand>
        <name>Zn(2+)</name>
        <dbReference type="ChEBI" id="CHEBI:29105"/>
        <label>1</label>
    </ligand>
</feature>
<feature type="binding site" evidence="1">
    <location>
        <position position="99"/>
    </location>
    <ligand>
        <name>Zn(2+)</name>
        <dbReference type="ChEBI" id="CHEBI:29105"/>
        <label>1</label>
    </ligand>
</feature>
<feature type="binding site" evidence="1">
    <location>
        <position position="99"/>
    </location>
    <ligand>
        <name>Zn(2+)</name>
        <dbReference type="ChEBI" id="CHEBI:29105"/>
        <label>2</label>
    </ligand>
</feature>
<feature type="binding site" evidence="1">
    <location>
        <position position="134"/>
    </location>
    <ligand>
        <name>Zn(2+)</name>
        <dbReference type="ChEBI" id="CHEBI:29105"/>
        <label>2</label>
    </ligand>
</feature>
<feature type="binding site" evidence="1">
    <location>
        <position position="162"/>
    </location>
    <ligand>
        <name>Zn(2+)</name>
        <dbReference type="ChEBI" id="CHEBI:29105"/>
        <label>1</label>
    </ligand>
</feature>
<feature type="binding site" evidence="1">
    <location>
        <position position="348"/>
    </location>
    <ligand>
        <name>Zn(2+)</name>
        <dbReference type="ChEBI" id="CHEBI:29105"/>
        <label>2</label>
    </ligand>
</feature>
<gene>
    <name evidence="1" type="primary">dapE</name>
    <name type="ordered locus">STY2721</name>
    <name type="ordered locus">t0376</name>
</gene>
<protein>
    <recommendedName>
        <fullName evidence="1">Succinyl-diaminopimelate desuccinylase</fullName>
        <shortName evidence="1">SDAP desuccinylase</shortName>
        <ecNumber evidence="1">3.5.1.18</ecNumber>
    </recommendedName>
    <alternativeName>
        <fullName evidence="1">N-succinyl-LL-2,6-diaminoheptanedioate amidohydrolase</fullName>
    </alternativeName>
</protein>
<organism>
    <name type="scientific">Salmonella typhi</name>
    <dbReference type="NCBI Taxonomy" id="90370"/>
    <lineage>
        <taxon>Bacteria</taxon>
        <taxon>Pseudomonadati</taxon>
        <taxon>Pseudomonadota</taxon>
        <taxon>Gammaproteobacteria</taxon>
        <taxon>Enterobacterales</taxon>
        <taxon>Enterobacteriaceae</taxon>
        <taxon>Salmonella</taxon>
    </lineage>
</organism>
<proteinExistence type="inferred from homology"/>
<accession>Q8Z4S2</accession>
<accession>Q7CBH8</accession>
<reference key="1">
    <citation type="journal article" date="2001" name="Nature">
        <title>Complete genome sequence of a multiple drug resistant Salmonella enterica serovar Typhi CT18.</title>
        <authorList>
            <person name="Parkhill J."/>
            <person name="Dougan G."/>
            <person name="James K.D."/>
            <person name="Thomson N.R."/>
            <person name="Pickard D."/>
            <person name="Wain J."/>
            <person name="Churcher C.M."/>
            <person name="Mungall K.L."/>
            <person name="Bentley S.D."/>
            <person name="Holden M.T.G."/>
            <person name="Sebaihia M."/>
            <person name="Baker S."/>
            <person name="Basham D."/>
            <person name="Brooks K."/>
            <person name="Chillingworth T."/>
            <person name="Connerton P."/>
            <person name="Cronin A."/>
            <person name="Davis P."/>
            <person name="Davies R.M."/>
            <person name="Dowd L."/>
            <person name="White N."/>
            <person name="Farrar J."/>
            <person name="Feltwell T."/>
            <person name="Hamlin N."/>
            <person name="Haque A."/>
            <person name="Hien T.T."/>
            <person name="Holroyd S."/>
            <person name="Jagels K."/>
            <person name="Krogh A."/>
            <person name="Larsen T.S."/>
            <person name="Leather S."/>
            <person name="Moule S."/>
            <person name="O'Gaora P."/>
            <person name="Parry C."/>
            <person name="Quail M.A."/>
            <person name="Rutherford K.M."/>
            <person name="Simmonds M."/>
            <person name="Skelton J."/>
            <person name="Stevens K."/>
            <person name="Whitehead S."/>
            <person name="Barrell B.G."/>
        </authorList>
    </citation>
    <scope>NUCLEOTIDE SEQUENCE [LARGE SCALE GENOMIC DNA]</scope>
    <source>
        <strain>CT18</strain>
    </source>
</reference>
<reference key="2">
    <citation type="journal article" date="2003" name="J. Bacteriol.">
        <title>Comparative genomics of Salmonella enterica serovar Typhi strains Ty2 and CT18.</title>
        <authorList>
            <person name="Deng W."/>
            <person name="Liou S.-R."/>
            <person name="Plunkett G. III"/>
            <person name="Mayhew G.F."/>
            <person name="Rose D.J."/>
            <person name="Burland V."/>
            <person name="Kodoyianni V."/>
            <person name="Schwartz D.C."/>
            <person name="Blattner F.R."/>
        </authorList>
    </citation>
    <scope>NUCLEOTIDE SEQUENCE [LARGE SCALE GENOMIC DNA]</scope>
    <source>
        <strain>ATCC 700931 / Ty2</strain>
    </source>
</reference>
<evidence type="ECO:0000255" key="1">
    <source>
        <dbReference type="HAMAP-Rule" id="MF_01690"/>
    </source>
</evidence>
<sequence>MSCPVIELTQQLIRRPSLSPDDVGCQALMIERLRKIGFTIEHMDFGDTQNFWAWRGRGETLAFAGHTDVVPAGDVDRWINPPFEPTIRDGMLFGRGAADMKGSLAAMVVAAERFVAQHPHHRGRLAFLITSDEEASAKNGTVKVVEALMARNERLDYCLVGEPSSTEIVGDVVKNGRRGSLTCNLTIHGVQGHVAYPHLADNPVHRAAPFLNELVAIEWDRGNDFFPATSMQIANIQAGTGSNNVIPGELFVQFNFRFSTELTDEMIKERVHALLEKHQLRYTVDWWLSGQPFLTARGKLVDAVVNAIEHYNEIKPQLLTTGGTSDGRFIARMGAQVVELGPVNATIHKINECVNAADLQLLARMYQRIMEQLVA</sequence>
<dbReference type="EC" id="3.5.1.18" evidence="1"/>
<dbReference type="EMBL" id="AE014613">
    <property type="protein sequence ID" value="AAO68094.1"/>
    <property type="molecule type" value="Genomic_DNA"/>
</dbReference>
<dbReference type="EMBL" id="AL513382">
    <property type="protein sequence ID" value="CAD02683.1"/>
    <property type="molecule type" value="Genomic_DNA"/>
</dbReference>
<dbReference type="RefSeq" id="NP_457017.1">
    <property type="nucleotide sequence ID" value="NC_003198.1"/>
</dbReference>
<dbReference type="RefSeq" id="WP_001277830.1">
    <property type="nucleotide sequence ID" value="NZ_WSUR01000007.1"/>
</dbReference>
<dbReference type="SMR" id="Q8Z4S2"/>
<dbReference type="STRING" id="220341.gene:17586617"/>
<dbReference type="MEROPS" id="M20.010"/>
<dbReference type="KEGG" id="stt:t0376"/>
<dbReference type="KEGG" id="sty:STY2721"/>
<dbReference type="PATRIC" id="fig|220341.7.peg.2759"/>
<dbReference type="eggNOG" id="COG0624">
    <property type="taxonomic scope" value="Bacteria"/>
</dbReference>
<dbReference type="HOGENOM" id="CLU_021802_4_0_6"/>
<dbReference type="OMA" id="PKYGWTD"/>
<dbReference type="OrthoDB" id="9809784at2"/>
<dbReference type="UniPathway" id="UPA00034">
    <property type="reaction ID" value="UER00021"/>
</dbReference>
<dbReference type="Proteomes" id="UP000000541">
    <property type="component" value="Chromosome"/>
</dbReference>
<dbReference type="Proteomes" id="UP000002670">
    <property type="component" value="Chromosome"/>
</dbReference>
<dbReference type="GO" id="GO:0008777">
    <property type="term" value="F:acetylornithine deacetylase activity"/>
    <property type="evidence" value="ECO:0007669"/>
    <property type="project" value="TreeGrafter"/>
</dbReference>
<dbReference type="GO" id="GO:0050897">
    <property type="term" value="F:cobalt ion binding"/>
    <property type="evidence" value="ECO:0007669"/>
    <property type="project" value="UniProtKB-UniRule"/>
</dbReference>
<dbReference type="GO" id="GO:0009014">
    <property type="term" value="F:succinyl-diaminopimelate desuccinylase activity"/>
    <property type="evidence" value="ECO:0007669"/>
    <property type="project" value="UniProtKB-UniRule"/>
</dbReference>
<dbReference type="GO" id="GO:0008270">
    <property type="term" value="F:zinc ion binding"/>
    <property type="evidence" value="ECO:0007669"/>
    <property type="project" value="UniProtKB-UniRule"/>
</dbReference>
<dbReference type="GO" id="GO:0019877">
    <property type="term" value="P:diaminopimelate biosynthetic process"/>
    <property type="evidence" value="ECO:0007669"/>
    <property type="project" value="UniProtKB-UniRule"/>
</dbReference>
<dbReference type="GO" id="GO:0006526">
    <property type="term" value="P:L-arginine biosynthetic process"/>
    <property type="evidence" value="ECO:0007669"/>
    <property type="project" value="TreeGrafter"/>
</dbReference>
<dbReference type="GO" id="GO:0009089">
    <property type="term" value="P:lysine biosynthetic process via diaminopimelate"/>
    <property type="evidence" value="ECO:0007669"/>
    <property type="project" value="UniProtKB-UniRule"/>
</dbReference>
<dbReference type="CDD" id="cd03891">
    <property type="entry name" value="M20_DapE_proteobac"/>
    <property type="match status" value="1"/>
</dbReference>
<dbReference type="FunFam" id="3.30.70.360:FF:000011">
    <property type="entry name" value="Succinyl-diaminopimelate desuccinylase"/>
    <property type="match status" value="1"/>
</dbReference>
<dbReference type="FunFam" id="3.40.630.10:FF:000005">
    <property type="entry name" value="Succinyl-diaminopimelate desuccinylase"/>
    <property type="match status" value="1"/>
</dbReference>
<dbReference type="FunFam" id="3.40.630.10:FF:000010">
    <property type="entry name" value="Succinyl-diaminopimelate desuccinylase"/>
    <property type="match status" value="1"/>
</dbReference>
<dbReference type="Gene3D" id="3.40.630.10">
    <property type="entry name" value="Zn peptidases"/>
    <property type="match status" value="2"/>
</dbReference>
<dbReference type="HAMAP" id="MF_01690">
    <property type="entry name" value="DapE"/>
    <property type="match status" value="1"/>
</dbReference>
<dbReference type="InterPro" id="IPR001261">
    <property type="entry name" value="ArgE/DapE_CS"/>
</dbReference>
<dbReference type="InterPro" id="IPR036264">
    <property type="entry name" value="Bact_exopeptidase_dim_dom"/>
</dbReference>
<dbReference type="InterPro" id="IPR005941">
    <property type="entry name" value="DapE_proteobac"/>
</dbReference>
<dbReference type="InterPro" id="IPR002933">
    <property type="entry name" value="Peptidase_M20"/>
</dbReference>
<dbReference type="InterPro" id="IPR011650">
    <property type="entry name" value="Peptidase_M20_dimer"/>
</dbReference>
<dbReference type="InterPro" id="IPR050072">
    <property type="entry name" value="Peptidase_M20A"/>
</dbReference>
<dbReference type="NCBIfam" id="TIGR01246">
    <property type="entry name" value="dapE_proteo"/>
    <property type="match status" value="1"/>
</dbReference>
<dbReference type="NCBIfam" id="NF009557">
    <property type="entry name" value="PRK13009.1"/>
    <property type="match status" value="1"/>
</dbReference>
<dbReference type="PANTHER" id="PTHR43808">
    <property type="entry name" value="ACETYLORNITHINE DEACETYLASE"/>
    <property type="match status" value="1"/>
</dbReference>
<dbReference type="PANTHER" id="PTHR43808:SF31">
    <property type="entry name" value="N-ACETYL-L-CITRULLINE DEACETYLASE"/>
    <property type="match status" value="1"/>
</dbReference>
<dbReference type="Pfam" id="PF07687">
    <property type="entry name" value="M20_dimer"/>
    <property type="match status" value="1"/>
</dbReference>
<dbReference type="Pfam" id="PF01546">
    <property type="entry name" value="Peptidase_M20"/>
    <property type="match status" value="1"/>
</dbReference>
<dbReference type="SUPFAM" id="SSF55031">
    <property type="entry name" value="Bacterial exopeptidase dimerisation domain"/>
    <property type="match status" value="1"/>
</dbReference>
<dbReference type="SUPFAM" id="SSF53187">
    <property type="entry name" value="Zn-dependent exopeptidases"/>
    <property type="match status" value="1"/>
</dbReference>
<dbReference type="PROSITE" id="PS00758">
    <property type="entry name" value="ARGE_DAPE_CPG2_1"/>
    <property type="match status" value="1"/>
</dbReference>
<dbReference type="PROSITE" id="PS00759">
    <property type="entry name" value="ARGE_DAPE_CPG2_2"/>
    <property type="match status" value="1"/>
</dbReference>